<proteinExistence type="predicted"/>
<name>ORF5_BOTVX</name>
<organismHost>
    <name type="scientific">Botryotinia fuckeliana</name>
    <name type="common">Noble rot fungus</name>
    <name type="synonym">Botrytis cinerea</name>
    <dbReference type="NCBI Taxonomy" id="40559"/>
</organismHost>
<organism>
    <name type="scientific">Botrytis virus X (isolate Botrytis cinerea/New Zealand/Howitt/2006)</name>
    <name type="common">BOTV-X</name>
    <dbReference type="NCBI Taxonomy" id="686947"/>
    <lineage>
        <taxon>Viruses</taxon>
        <taxon>Riboviria</taxon>
        <taxon>Orthornavirae</taxon>
        <taxon>Kitrinoviricota</taxon>
        <taxon>Alsuviricetes</taxon>
        <taxon>Tymovirales</taxon>
        <taxon>Alphaflexiviridae</taxon>
        <taxon>Botrexvirus</taxon>
        <taxon>Botrytis virus X</taxon>
    </lineage>
</organism>
<keyword id="KW-1185">Reference proteome</keyword>
<feature type="chain" id="PRO_0000401071" description="Uncharacterized ORF5 protein">
    <location>
        <begin position="1"/>
        <end position="128"/>
    </location>
</feature>
<accession>Q6YNQ3</accession>
<reference key="1">
    <citation type="journal article" date="2006" name="Arch. Virol.">
        <title>Genome characterization of a flexuous rod-shaped mycovirus, Botrytis virus X, reveals high amino acid identity to genes from plant 'potex-like' viruses.</title>
        <authorList>
            <person name="Howitt R.L."/>
            <person name="Beever R.E."/>
            <person name="Pearson M.N."/>
            <person name="Forster R.L."/>
        </authorList>
    </citation>
    <scope>NUCLEOTIDE SEQUENCE [GENOMIC RNA]</scope>
</reference>
<gene>
    <name type="primary">ORF5</name>
</gene>
<protein>
    <recommendedName>
        <fullName>Uncharacterized ORF5 protein</fullName>
    </recommendedName>
</protein>
<dbReference type="EMBL" id="AY055762">
    <property type="protein sequence ID" value="AAL17726.1"/>
    <property type="molecule type" value="Genomic_RNA"/>
</dbReference>
<dbReference type="RefSeq" id="NP_932311.1">
    <property type="nucleotide sequence ID" value="NC_005132.1"/>
</dbReference>
<dbReference type="KEGG" id="vg:2943231"/>
<dbReference type="Proteomes" id="UP000001664">
    <property type="component" value="Segment"/>
</dbReference>
<sequence length="128" mass="14331">MSDFNDELVIRCGDTVYSPIVCSVLHPTISAKDEIVMHVDVIHSPPKYRGFANSTRHIMPWRMEHNHKTMSSGLHCTDVLAVEKEALPGAIATFFSSLKTPINITFPDKVHVTREPLKPNDNAHIDEA</sequence>